<evidence type="ECO:0000255" key="1">
    <source>
        <dbReference type="HAMAP-Rule" id="MF_01521"/>
    </source>
</evidence>
<evidence type="ECO:0000305" key="2"/>
<organism>
    <name type="scientific">Corynebacterium efficiens (strain DSM 44549 / YS-314 / AJ 12310 / JCM 11189 / NBRC 100395)</name>
    <dbReference type="NCBI Taxonomy" id="196164"/>
    <lineage>
        <taxon>Bacteria</taxon>
        <taxon>Bacillati</taxon>
        <taxon>Actinomycetota</taxon>
        <taxon>Actinomycetes</taxon>
        <taxon>Mycobacteriales</taxon>
        <taxon>Corynebacteriaceae</taxon>
        <taxon>Corynebacterium</taxon>
    </lineage>
</organism>
<comment type="function">
    <text evidence="1">Probably functions as a manganese efflux pump.</text>
</comment>
<comment type="subcellular location">
    <subcellularLocation>
        <location evidence="1">Cell membrane</location>
        <topology evidence="1">Multi-pass membrane protein</topology>
    </subcellularLocation>
</comment>
<comment type="similarity">
    <text evidence="1">Belongs to the MntP (TC 9.B.29) family.</text>
</comment>
<comment type="sequence caution" evidence="2">
    <conflict type="erroneous initiation">
        <sequence resource="EMBL-CDS" id="BAC18408"/>
    </conflict>
</comment>
<name>MNTP_COREF</name>
<feature type="chain" id="PRO_0000155645" description="Putative manganese efflux pump MntP">
    <location>
        <begin position="1"/>
        <end position="190"/>
    </location>
</feature>
<feature type="transmembrane region" description="Helical" evidence="1">
    <location>
        <begin position="37"/>
        <end position="57"/>
    </location>
</feature>
<feature type="transmembrane region" description="Helical" evidence="1">
    <location>
        <begin position="64"/>
        <end position="84"/>
    </location>
</feature>
<feature type="transmembrane region" description="Helical" evidence="1">
    <location>
        <begin position="111"/>
        <end position="131"/>
    </location>
</feature>
<feature type="transmembrane region" description="Helical" evidence="1">
    <location>
        <begin position="135"/>
        <end position="155"/>
    </location>
</feature>
<feature type="transmembrane region" description="Helical" evidence="1">
    <location>
        <begin position="164"/>
        <end position="184"/>
    </location>
</feature>
<proteinExistence type="inferred from homology"/>
<accession>Q8FTH1</accession>
<gene>
    <name evidence="1" type="primary">mntP</name>
    <name type="ordered locus">CE1598</name>
</gene>
<keyword id="KW-1003">Cell membrane</keyword>
<keyword id="KW-0406">Ion transport</keyword>
<keyword id="KW-0464">Manganese</keyword>
<keyword id="KW-0472">Membrane</keyword>
<keyword id="KW-1185">Reference proteome</keyword>
<keyword id="KW-0812">Transmembrane</keyword>
<keyword id="KW-1133">Transmembrane helix</keyword>
<keyword id="KW-0813">Transport</keyword>
<protein>
    <recommendedName>
        <fullName evidence="1">Putative manganese efflux pump MntP</fullName>
    </recommendedName>
</protein>
<reference key="1">
    <citation type="journal article" date="2003" name="Genome Res.">
        <title>Comparative complete genome sequence analysis of the amino acid replacements responsible for the thermostability of Corynebacterium efficiens.</title>
        <authorList>
            <person name="Nishio Y."/>
            <person name="Nakamura Y."/>
            <person name="Kawarabayasi Y."/>
            <person name="Usuda Y."/>
            <person name="Kimura E."/>
            <person name="Sugimoto S."/>
            <person name="Matsui K."/>
            <person name="Yamagishi A."/>
            <person name="Kikuchi H."/>
            <person name="Ikeo K."/>
            <person name="Gojobori T."/>
        </authorList>
    </citation>
    <scope>NUCLEOTIDE SEQUENCE [LARGE SCALE GENOMIC DNA]</scope>
    <source>
        <strain>DSM 44549 / YS-314 / AJ 12310 / JCM 11189 / NBRC 100395</strain>
    </source>
</reference>
<sequence>MPLVHVMLLSCGVAADAFACSIARGTAIRVNIIKRSLILAGIFGVFQALMPVIGWGIGYFFAELSFIRAIDHWVAFLLLAGVGAKMIWDAFHQDADVDVIDTGAVQLRPALILGLATSIDALAVGMGMAFVHAPIITLALAMGLTTFVLSLVGAWMGHHGGGRFGGWATVIGGLVLIGLGGNILFDHMLG</sequence>
<dbReference type="EMBL" id="BA000035">
    <property type="protein sequence ID" value="BAC18408.1"/>
    <property type="status" value="ALT_INIT"/>
    <property type="molecule type" value="Genomic_DNA"/>
</dbReference>
<dbReference type="RefSeq" id="WP_035108800.1">
    <property type="nucleotide sequence ID" value="NC_004369.1"/>
</dbReference>
<dbReference type="STRING" id="196164.gene:10742017"/>
<dbReference type="KEGG" id="cef:CE1598"/>
<dbReference type="eggNOG" id="COG1971">
    <property type="taxonomic scope" value="Bacteria"/>
</dbReference>
<dbReference type="HOGENOM" id="CLU_096410_3_0_11"/>
<dbReference type="OrthoDB" id="9811590at2"/>
<dbReference type="Proteomes" id="UP000001409">
    <property type="component" value="Chromosome"/>
</dbReference>
<dbReference type="GO" id="GO:0005886">
    <property type="term" value="C:plasma membrane"/>
    <property type="evidence" value="ECO:0007669"/>
    <property type="project" value="UniProtKB-SubCell"/>
</dbReference>
<dbReference type="GO" id="GO:0005384">
    <property type="term" value="F:manganese ion transmembrane transporter activity"/>
    <property type="evidence" value="ECO:0007669"/>
    <property type="project" value="UniProtKB-UniRule"/>
</dbReference>
<dbReference type="HAMAP" id="MF_01521">
    <property type="entry name" value="MntP_pump"/>
    <property type="match status" value="1"/>
</dbReference>
<dbReference type="InterPro" id="IPR003810">
    <property type="entry name" value="Mntp/YtaF"/>
</dbReference>
<dbReference type="InterPro" id="IPR022929">
    <property type="entry name" value="Put_MntP"/>
</dbReference>
<dbReference type="PANTHER" id="PTHR35529">
    <property type="entry name" value="MANGANESE EFFLUX PUMP MNTP-RELATED"/>
    <property type="match status" value="1"/>
</dbReference>
<dbReference type="PANTHER" id="PTHR35529:SF1">
    <property type="entry name" value="MANGANESE EFFLUX PUMP MNTP-RELATED"/>
    <property type="match status" value="1"/>
</dbReference>
<dbReference type="Pfam" id="PF02659">
    <property type="entry name" value="Mntp"/>
    <property type="match status" value="1"/>
</dbReference>